<name>UBP2_HUMAN</name>
<evidence type="ECO:0000250" key="1">
    <source>
        <dbReference type="UniProtKB" id="O88623"/>
    </source>
</evidence>
<evidence type="ECO:0000250" key="2">
    <source>
        <dbReference type="UniProtKB" id="Q5U349"/>
    </source>
</evidence>
<evidence type="ECO:0000255" key="3">
    <source>
        <dbReference type="PROSITE-ProRule" id="PRU10092"/>
    </source>
</evidence>
<evidence type="ECO:0000255" key="4">
    <source>
        <dbReference type="PROSITE-ProRule" id="PRU10093"/>
    </source>
</evidence>
<evidence type="ECO:0000256" key="5">
    <source>
        <dbReference type="SAM" id="MobiDB-lite"/>
    </source>
</evidence>
<evidence type="ECO:0000269" key="6">
    <source>
    </source>
</evidence>
<evidence type="ECO:0000269" key="7">
    <source>
    </source>
</evidence>
<evidence type="ECO:0000269" key="8">
    <source>
    </source>
</evidence>
<evidence type="ECO:0000269" key="9">
    <source>
    </source>
</evidence>
<evidence type="ECO:0000269" key="10">
    <source>
    </source>
</evidence>
<evidence type="ECO:0000269" key="11">
    <source>
    </source>
</evidence>
<evidence type="ECO:0000303" key="12">
    <source>
    </source>
</evidence>
<evidence type="ECO:0000303" key="13">
    <source>
    </source>
</evidence>
<evidence type="ECO:0000303" key="14">
    <source ref="1"/>
</evidence>
<evidence type="ECO:0000303" key="15">
    <source ref="2"/>
</evidence>
<evidence type="ECO:0000305" key="16"/>
<evidence type="ECO:0007829" key="17">
    <source>
        <dbReference type="PDB" id="3NHE"/>
    </source>
</evidence>
<evidence type="ECO:0007829" key="18">
    <source>
        <dbReference type="PDB" id="3V6C"/>
    </source>
</evidence>
<evidence type="ECO:0007829" key="19">
    <source>
        <dbReference type="PDB" id="3V6E"/>
    </source>
</evidence>
<evidence type="ECO:0007829" key="20">
    <source>
        <dbReference type="PDB" id="5XU8"/>
    </source>
</evidence>
<evidence type="ECO:0007829" key="21">
    <source>
        <dbReference type="PDB" id="5XVE"/>
    </source>
</evidence>
<evidence type="ECO:0007829" key="22">
    <source>
        <dbReference type="PDB" id="6DGF"/>
    </source>
</evidence>
<reference key="1">
    <citation type="submission" date="1998-07" db="EMBL/GenBank/DDBJ databases">
        <title>Cloning and expression of the human and mouse UBP41.</title>
        <authorList>
            <person name="Gong L."/>
            <person name="Yeh E.T.H."/>
        </authorList>
    </citation>
    <scope>NUCLEOTIDE SEQUENCE [MRNA] (ISOFORM 2)</scope>
    <source>
        <tissue>Placenta</tissue>
    </source>
</reference>
<reference key="2">
    <citation type="submission" date="2001-10" db="EMBL/GenBank/DDBJ databases">
        <title>Molecular cloning and characterization of USP2b in the human prostate cancer cell line LNCaP.</title>
        <authorList>
            <person name="Rossi S."/>
            <person name="Graner E."/>
            <person name="Weinstein L.J."/>
            <person name="Loda M."/>
        </authorList>
    </citation>
    <scope>NUCLEOTIDE SEQUENCE [MRNA] (ISOFORM 4)</scope>
    <source>
        <tissue>Prostate cancer</tissue>
    </source>
</reference>
<reference key="3">
    <citation type="journal article" date="2004" name="Nat. Genet.">
        <title>Complete sequencing and characterization of 21,243 full-length human cDNAs.</title>
        <authorList>
            <person name="Ota T."/>
            <person name="Suzuki Y."/>
            <person name="Nishikawa T."/>
            <person name="Otsuki T."/>
            <person name="Sugiyama T."/>
            <person name="Irie R."/>
            <person name="Wakamatsu A."/>
            <person name="Hayashi K."/>
            <person name="Sato H."/>
            <person name="Nagai K."/>
            <person name="Kimura K."/>
            <person name="Makita H."/>
            <person name="Sekine M."/>
            <person name="Obayashi M."/>
            <person name="Nishi T."/>
            <person name="Shibahara T."/>
            <person name="Tanaka T."/>
            <person name="Ishii S."/>
            <person name="Yamamoto J."/>
            <person name="Saito K."/>
            <person name="Kawai Y."/>
            <person name="Isono Y."/>
            <person name="Nakamura Y."/>
            <person name="Nagahari K."/>
            <person name="Murakami K."/>
            <person name="Yasuda T."/>
            <person name="Iwayanagi T."/>
            <person name="Wagatsuma M."/>
            <person name="Shiratori A."/>
            <person name="Sudo H."/>
            <person name="Hosoiri T."/>
            <person name="Kaku Y."/>
            <person name="Kodaira H."/>
            <person name="Kondo H."/>
            <person name="Sugawara M."/>
            <person name="Takahashi M."/>
            <person name="Kanda K."/>
            <person name="Yokoi T."/>
            <person name="Furuya T."/>
            <person name="Kikkawa E."/>
            <person name="Omura Y."/>
            <person name="Abe K."/>
            <person name="Kamihara K."/>
            <person name="Katsuta N."/>
            <person name="Sato K."/>
            <person name="Tanikawa M."/>
            <person name="Yamazaki M."/>
            <person name="Ninomiya K."/>
            <person name="Ishibashi T."/>
            <person name="Yamashita H."/>
            <person name="Murakawa K."/>
            <person name="Fujimori K."/>
            <person name="Tanai H."/>
            <person name="Kimata M."/>
            <person name="Watanabe M."/>
            <person name="Hiraoka S."/>
            <person name="Chiba Y."/>
            <person name="Ishida S."/>
            <person name="Ono Y."/>
            <person name="Takiguchi S."/>
            <person name="Watanabe S."/>
            <person name="Yosida M."/>
            <person name="Hotuta T."/>
            <person name="Kusano J."/>
            <person name="Kanehori K."/>
            <person name="Takahashi-Fujii A."/>
            <person name="Hara H."/>
            <person name="Tanase T.-O."/>
            <person name="Nomura Y."/>
            <person name="Togiya S."/>
            <person name="Komai F."/>
            <person name="Hara R."/>
            <person name="Takeuchi K."/>
            <person name="Arita M."/>
            <person name="Imose N."/>
            <person name="Musashino K."/>
            <person name="Yuuki H."/>
            <person name="Oshima A."/>
            <person name="Sasaki N."/>
            <person name="Aotsuka S."/>
            <person name="Yoshikawa Y."/>
            <person name="Matsunawa H."/>
            <person name="Ichihara T."/>
            <person name="Shiohata N."/>
            <person name="Sano S."/>
            <person name="Moriya S."/>
            <person name="Momiyama H."/>
            <person name="Satoh N."/>
            <person name="Takami S."/>
            <person name="Terashima Y."/>
            <person name="Suzuki O."/>
            <person name="Nakagawa S."/>
            <person name="Senoh A."/>
            <person name="Mizoguchi H."/>
            <person name="Goto Y."/>
            <person name="Shimizu F."/>
            <person name="Wakebe H."/>
            <person name="Hishigaki H."/>
            <person name="Watanabe T."/>
            <person name="Sugiyama A."/>
            <person name="Takemoto M."/>
            <person name="Kawakami B."/>
            <person name="Yamazaki M."/>
            <person name="Watanabe K."/>
            <person name="Kumagai A."/>
            <person name="Itakura S."/>
            <person name="Fukuzumi Y."/>
            <person name="Fujimori Y."/>
            <person name="Komiyama M."/>
            <person name="Tashiro H."/>
            <person name="Tanigami A."/>
            <person name="Fujiwara T."/>
            <person name="Ono T."/>
            <person name="Yamada K."/>
            <person name="Fujii Y."/>
            <person name="Ozaki K."/>
            <person name="Hirao M."/>
            <person name="Ohmori Y."/>
            <person name="Kawabata A."/>
            <person name="Hikiji T."/>
            <person name="Kobatake N."/>
            <person name="Inagaki H."/>
            <person name="Ikema Y."/>
            <person name="Okamoto S."/>
            <person name="Okitani R."/>
            <person name="Kawakami T."/>
            <person name="Noguchi S."/>
            <person name="Itoh T."/>
            <person name="Shigeta K."/>
            <person name="Senba T."/>
            <person name="Matsumura K."/>
            <person name="Nakajima Y."/>
            <person name="Mizuno T."/>
            <person name="Morinaga M."/>
            <person name="Sasaki M."/>
            <person name="Togashi T."/>
            <person name="Oyama M."/>
            <person name="Hata H."/>
            <person name="Watanabe M."/>
            <person name="Komatsu T."/>
            <person name="Mizushima-Sugano J."/>
            <person name="Satoh T."/>
            <person name="Shirai Y."/>
            <person name="Takahashi Y."/>
            <person name="Nakagawa K."/>
            <person name="Okumura K."/>
            <person name="Nagase T."/>
            <person name="Nomura N."/>
            <person name="Kikuchi H."/>
            <person name="Masuho Y."/>
            <person name="Yamashita R."/>
            <person name="Nakai K."/>
            <person name="Yada T."/>
            <person name="Nakamura Y."/>
            <person name="Ohara O."/>
            <person name="Isogai T."/>
            <person name="Sugano S."/>
        </authorList>
    </citation>
    <scope>NUCLEOTIDE SEQUENCE [LARGE SCALE MRNA] (ISOFORMS 1 AND 4)</scope>
    <source>
        <tissue>Testis</tissue>
    </source>
</reference>
<reference key="4">
    <citation type="submission" date="2007-02" db="EMBL/GenBank/DDBJ databases">
        <authorList>
            <consortium name="NHLBI resequencing and genotyping service (RS&amp;G)"/>
        </authorList>
    </citation>
    <scope>NUCLEOTIDE SEQUENCE [GENOMIC DNA]</scope>
</reference>
<reference key="5">
    <citation type="journal article" date="2006" name="Nature">
        <title>Human chromosome 11 DNA sequence and analysis including novel gene identification.</title>
        <authorList>
            <person name="Taylor T.D."/>
            <person name="Noguchi H."/>
            <person name="Totoki Y."/>
            <person name="Toyoda A."/>
            <person name="Kuroki Y."/>
            <person name="Dewar K."/>
            <person name="Lloyd C."/>
            <person name="Itoh T."/>
            <person name="Takeda T."/>
            <person name="Kim D.-W."/>
            <person name="She X."/>
            <person name="Barlow K.F."/>
            <person name="Bloom T."/>
            <person name="Bruford E."/>
            <person name="Chang J.L."/>
            <person name="Cuomo C.A."/>
            <person name="Eichler E."/>
            <person name="FitzGerald M.G."/>
            <person name="Jaffe D.B."/>
            <person name="LaButti K."/>
            <person name="Nicol R."/>
            <person name="Park H.-S."/>
            <person name="Seaman C."/>
            <person name="Sougnez C."/>
            <person name="Yang X."/>
            <person name="Zimmer A.R."/>
            <person name="Zody M.C."/>
            <person name="Birren B.W."/>
            <person name="Nusbaum C."/>
            <person name="Fujiyama A."/>
            <person name="Hattori M."/>
            <person name="Rogers J."/>
            <person name="Lander E.S."/>
            <person name="Sakaki Y."/>
        </authorList>
    </citation>
    <scope>NUCLEOTIDE SEQUENCE [LARGE SCALE GENOMIC DNA]</scope>
</reference>
<reference key="6">
    <citation type="submission" date="2005-07" db="EMBL/GenBank/DDBJ databases">
        <authorList>
            <person name="Mural R.J."/>
            <person name="Istrail S."/>
            <person name="Sutton G.G."/>
            <person name="Florea L."/>
            <person name="Halpern A.L."/>
            <person name="Mobarry C.M."/>
            <person name="Lippert R."/>
            <person name="Walenz B."/>
            <person name="Shatkay H."/>
            <person name="Dew I."/>
            <person name="Miller J.R."/>
            <person name="Flanigan M.J."/>
            <person name="Edwards N.J."/>
            <person name="Bolanos R."/>
            <person name="Fasulo D."/>
            <person name="Halldorsson B.V."/>
            <person name="Hannenhalli S."/>
            <person name="Turner R."/>
            <person name="Yooseph S."/>
            <person name="Lu F."/>
            <person name="Nusskern D.R."/>
            <person name="Shue B.C."/>
            <person name="Zheng X.H."/>
            <person name="Zhong F."/>
            <person name="Delcher A.L."/>
            <person name="Huson D.H."/>
            <person name="Kravitz S.A."/>
            <person name="Mouchard L."/>
            <person name="Reinert K."/>
            <person name="Remington K.A."/>
            <person name="Clark A.G."/>
            <person name="Waterman M.S."/>
            <person name="Eichler E.E."/>
            <person name="Adams M.D."/>
            <person name="Hunkapiller M.W."/>
            <person name="Myers E.W."/>
            <person name="Venter J.C."/>
        </authorList>
    </citation>
    <scope>NUCLEOTIDE SEQUENCE [LARGE SCALE GENOMIC DNA]</scope>
</reference>
<reference key="7">
    <citation type="journal article" date="2004" name="Genome Res.">
        <title>The status, quality, and expansion of the NIH full-length cDNA project: the Mammalian Gene Collection (MGC).</title>
        <authorList>
            <consortium name="The MGC Project Team"/>
        </authorList>
    </citation>
    <scope>NUCLEOTIDE SEQUENCE [LARGE SCALE MRNA] (ISOFORMS 1 AND 3)</scope>
    <source>
        <tissue>Lymph</tissue>
        <tissue>Testis</tissue>
    </source>
</reference>
<reference key="8">
    <citation type="journal article" date="2007" name="EMBO J.">
        <title>The deubiquitinating enzyme USP2a regulates the p53 pathway by targeting Mdm2.</title>
        <authorList>
            <person name="Stevenson L.F."/>
            <person name="Sparks A."/>
            <person name="Allende-Vega N."/>
            <person name="Xirodimas D.P."/>
            <person name="Lane D.P."/>
            <person name="Saville M.K."/>
        </authorList>
    </citation>
    <scope>FUNCTION</scope>
    <scope>INTERACTION WITH MDM2</scope>
    <scope>MUTAGENESIS OF HIS-549</scope>
</reference>
<reference key="9">
    <citation type="journal article" date="2009" name="Mol. Cell">
        <title>Suppression of cancer cell growth by promoting cyclin D1 degradation.</title>
        <authorList>
            <person name="Shan J."/>
            <person name="Zhao W."/>
            <person name="Gu W."/>
        </authorList>
    </citation>
    <scope>FUNCTION</scope>
    <scope>INTERACTION WITH CCND1</scope>
    <scope>MUTAGENESIS OF CYS-276</scope>
</reference>
<reference key="10">
    <citation type="journal article" date="2010" name="Oncogene">
        <title>MdmX is a substrate for the deubiquitinating enzyme USP2a.</title>
        <authorList>
            <person name="Allende-Vega N."/>
            <person name="Sparks A."/>
            <person name="Lane D.P."/>
            <person name="Saville M.K."/>
        </authorList>
    </citation>
    <scope>FUNCTION</scope>
    <scope>INTERACTION WITH MDM2 AND MDM4</scope>
    <scope>INDUCTION</scope>
    <scope>MUTAGENESIS OF HIS-549</scope>
</reference>
<reference key="11">
    <citation type="journal article" date="2010" name="Pathol. Int.">
        <title>Expression of USP2-69 in mesangial cells in vivo and in vitro.</title>
        <authorList>
            <person name="Wang S."/>
            <person name="Wu H."/>
            <person name="Liu Y."/>
            <person name="Sun J."/>
            <person name="Zhao Z."/>
            <person name="Chen Q."/>
            <person name="Guo M."/>
            <person name="Ma D."/>
            <person name="Zhang Z."/>
        </authorList>
    </citation>
    <scope>TISSUE SPECIFICITY</scope>
</reference>
<reference key="12">
    <citation type="journal article" date="2012" name="Heart Rhythm">
        <title>Deubiquitylating enzyme USP2 counteracts Nedd4-2-mediated downregulation of KCNQ1 potassium channels.</title>
        <authorList>
            <person name="Krzystanek K."/>
            <person name="Rasmussen H.B."/>
            <person name="Grunnet M."/>
            <person name="Staub O."/>
            <person name="Olesen S.P."/>
            <person name="Abriel H."/>
            <person name="Jespersen T."/>
        </authorList>
    </citation>
    <scope>INTERACTION WITH KCNQ1</scope>
</reference>
<reference key="13">
    <citation type="submission" date="2009-02" db="PDB data bank">
        <title>Covalent ubiquitin-usp2 complex.</title>
        <authorList>
            <consortium name="Structural genomics consortium (SGC)"/>
        </authorList>
    </citation>
    <scope>X-RAY CRYSTALLOGRAPHY (2.20 ANGSTROMS) OF 251-605</scope>
</reference>
<reference key="14">
    <citation type="journal article" date="2006" name="Structure">
        <title>Structural basis of ubiquitin recognition by the deubiquitinating protease USP2.</title>
        <authorList>
            <person name="Renatus M."/>
            <person name="Parrado S.G."/>
            <person name="D'Arcy A."/>
            <person name="Eidhoff U."/>
            <person name="Gerhartz B."/>
            <person name="Hassiepen U."/>
            <person name="Pierrat B."/>
            <person name="Riedl R."/>
            <person name="Vinzenz D."/>
            <person name="Worpenberg S."/>
            <person name="Kroemer M."/>
        </authorList>
    </citation>
    <scope>X-RAY CRYSTALLOGRAPHY (1.85 ANGSTROMS) OF 258-605 IN COMPLEX WITH UBIQUITIN AND ZINC-BINDING</scope>
    <scope>ACTIVITY REGULATION</scope>
</reference>
<feature type="chain" id="PRO_0000080616" description="Ubiquitin carboxyl-terminal hydrolase 2">
    <location>
        <begin position="1"/>
        <end position="605"/>
    </location>
</feature>
<feature type="domain" description="USP">
    <location>
        <begin position="267"/>
        <end position="599"/>
    </location>
</feature>
<feature type="region of interest" description="Necessary for interaction with MDM4" evidence="8">
    <location>
        <begin position="1"/>
        <end position="200"/>
    </location>
</feature>
<feature type="region of interest" description="Disordered" evidence="5">
    <location>
        <begin position="71"/>
        <end position="107"/>
    </location>
</feature>
<feature type="region of interest" description="Disordered" evidence="5">
    <location>
        <begin position="237"/>
        <end position="264"/>
    </location>
</feature>
<feature type="region of interest" description="Necessary for interaction with MDM4" evidence="8">
    <location>
        <begin position="403"/>
        <end position="503"/>
    </location>
</feature>
<feature type="compositionally biased region" description="Basic and acidic residues" evidence="5">
    <location>
        <begin position="90"/>
        <end position="100"/>
    </location>
</feature>
<feature type="compositionally biased region" description="Low complexity" evidence="5">
    <location>
        <begin position="245"/>
        <end position="255"/>
    </location>
</feature>
<feature type="active site" description="Nucleophile" evidence="3 4">
    <location>
        <position position="276"/>
    </location>
</feature>
<feature type="active site" description="Proton acceptor" evidence="3 4">
    <location>
        <position position="557"/>
    </location>
</feature>
<feature type="binding site" evidence="6">
    <location>
        <position position="425"/>
    </location>
    <ligand>
        <name>Zn(2+)</name>
        <dbReference type="ChEBI" id="CHEBI:29105"/>
    </ligand>
</feature>
<feature type="binding site" evidence="6">
    <location>
        <position position="428"/>
    </location>
    <ligand>
        <name>Zn(2+)</name>
        <dbReference type="ChEBI" id="CHEBI:29105"/>
    </ligand>
</feature>
<feature type="binding site" evidence="6">
    <location>
        <position position="476"/>
    </location>
    <ligand>
        <name>Zn(2+)</name>
        <dbReference type="ChEBI" id="CHEBI:29105"/>
    </ligand>
</feature>
<feature type="binding site" evidence="6">
    <location>
        <position position="479"/>
    </location>
    <ligand>
        <name>Zn(2+)</name>
        <dbReference type="ChEBI" id="CHEBI:29105"/>
    </ligand>
</feature>
<feature type="splice variant" id="VSP_039559" description="In isoform 3." evidence="13">
    <original>MSQLSSTLKRYTESARYTDAHYAKSGYGAYTPSSYGANLAASLLEKEKLGFKPVPTSSFLTRPRTYGPSSLLDYDRGRPLLRPDITGGGKRAESQTRGTERPLGSGLSGGSGFPYGVTNNCLSYLPINAYDQGVTLTQKLDSQSDLARDFSSLRTSDSYRIDPRNLGRSPMLARTRKELCTLQGLYQTASCPEYLVDYLENYGRKGSASQVPSQAPPSRVPEIISPTYRPIGRYTLWETGKGQAPGPSRSSSPGRDGM</original>
    <variation>MLVPGSTRPYSKKRQ</variation>
    <location>
        <begin position="1"/>
        <end position="258"/>
    </location>
</feature>
<feature type="splice variant" id="VSP_039560" description="In isoform 4." evidence="12 15">
    <original>MSQLSSTLKRYTESARYTDAHYAKSGYGAYTPSSYGANLAASLLEKEKLGFKPVPTSSFLTRPRTYGPSSLLDYDRGRPLLRPDITGGGKRAESQTRGTERPLGSGLSGGSGFPYGVTNNCLSYLPINAYDQGVTLTQKLDSQSDLARDFSSLRTSDSYRIDPRNLGRSPMLARTRKELCTLQGLYQTASCPEYLVDYLENYGRKGSASQVPSQAPPSRVPEIISPTYRPIGRYTLWETGKGQAPGPSRSSSPGRDGM</original>
    <variation>MRTSYTVTLPEDPPAAPFPALAKELRPRSPLSPSLLLSTFVGLLLNKAK</variation>
    <location>
        <begin position="1"/>
        <end position="258"/>
    </location>
</feature>
<feature type="splice variant" id="VSP_005256" description="In isoform 2." evidence="14">
    <location>
        <begin position="1"/>
        <end position="252"/>
    </location>
</feature>
<feature type="splice variant" id="VSP_005257" description="In isoform 2." evidence="14">
    <original>PGRDGM</original>
    <variation>MLNKAK</variation>
    <location>
        <begin position="253"/>
        <end position="258"/>
    </location>
</feature>
<feature type="sequence variant" id="VAR_051519" description="In dbSNP:rs33929148.">
    <original>R</original>
    <variation>Q</variation>
    <location>
        <position position="174"/>
    </location>
</feature>
<feature type="sequence variant" id="VAR_051520" description="In dbSNP:rs45533837.">
    <original>N</original>
    <variation>S</variation>
    <location>
        <position position="383"/>
    </location>
</feature>
<feature type="mutagenesis site" description="Loss of enzymatic activity. Increases the steady-state level of CCND1." evidence="9">
    <original>C</original>
    <variation>A</variation>
    <location>
        <position position="276"/>
    </location>
</feature>
<feature type="mutagenesis site" description="Loss of enzymatic activity. Increases the steady-state level of MDM2 and MDM4 that leads to attenuation of MDM2-mediated degradation of p53/TP53 and MDM4. Increases the level of p53/TP53 and MDM4 ubiquitin conjugates." evidence="7 8">
    <original>H</original>
    <variation>A</variation>
    <location>
        <position position="549"/>
    </location>
</feature>
<feature type="sequence conflict" description="In Ref. 3; BAB71388." evidence="16" ref="3">
    <original>S</original>
    <variation>G</variation>
    <location>
        <position position="421"/>
    </location>
</feature>
<feature type="sequence conflict" description="In Ref. 3; BAB71388." evidence="16" ref="3">
    <original>H</original>
    <variation>R</variation>
    <location>
        <position position="501"/>
    </location>
</feature>
<feature type="sequence conflict" description="In Ref. 1; AAC28392." evidence="16" ref="1">
    <original>L</original>
    <variation>H</variation>
    <location>
        <position position="594"/>
    </location>
</feature>
<feature type="sequence conflict" description="In Ref. 1; AAC28392." evidence="16" ref="1">
    <original>PSRM</original>
    <variation>TSPI</variation>
    <location>
        <begin position="602"/>
        <end position="605"/>
    </location>
</feature>
<feature type="strand" evidence="19">
    <location>
        <begin position="272"/>
        <end position="274"/>
    </location>
</feature>
<feature type="helix" evidence="21">
    <location>
        <begin position="276"/>
        <end position="286"/>
    </location>
</feature>
<feature type="helix" evidence="21">
    <location>
        <begin position="289"/>
        <end position="296"/>
    </location>
</feature>
<feature type="helix" evidence="21">
    <location>
        <begin position="299"/>
        <end position="302"/>
    </location>
</feature>
<feature type="helix" evidence="21">
    <location>
        <begin position="312"/>
        <end position="325"/>
    </location>
</feature>
<feature type="helix" evidence="21">
    <location>
        <begin position="337"/>
        <end position="346"/>
    </location>
</feature>
<feature type="helix" evidence="21">
    <location>
        <begin position="348"/>
        <end position="350"/>
    </location>
</feature>
<feature type="strand" evidence="17">
    <location>
        <begin position="351"/>
        <end position="353"/>
    </location>
</feature>
<feature type="helix" evidence="21">
    <location>
        <begin position="358"/>
        <end position="373"/>
    </location>
</feature>
<feature type="helix" evidence="21">
    <location>
        <begin position="392"/>
        <end position="404"/>
    </location>
</feature>
<feature type="helix" evidence="21">
    <location>
        <begin position="410"/>
        <end position="415"/>
    </location>
</feature>
<feature type="strand" evidence="21">
    <location>
        <begin position="417"/>
        <end position="425"/>
    </location>
</feature>
<feature type="turn" evidence="21">
    <location>
        <begin position="426"/>
        <end position="428"/>
    </location>
</feature>
<feature type="strand" evidence="21">
    <location>
        <begin position="431"/>
        <end position="443"/>
    </location>
</feature>
<feature type="strand" evidence="21">
    <location>
        <begin position="450"/>
        <end position="454"/>
    </location>
</feature>
<feature type="helix" evidence="21">
    <location>
        <begin position="455"/>
        <end position="463"/>
    </location>
</feature>
<feature type="strand" evidence="21">
    <location>
        <begin position="466"/>
        <end position="468"/>
    </location>
</feature>
<feature type="helix" evidence="21">
    <location>
        <begin position="470"/>
        <end position="472"/>
    </location>
</feature>
<feature type="turn" evidence="21">
    <location>
        <begin position="477"/>
        <end position="480"/>
    </location>
</feature>
<feature type="strand" evidence="21">
    <location>
        <begin position="485"/>
        <end position="493"/>
    </location>
</feature>
<feature type="strand" evidence="21">
    <location>
        <begin position="496"/>
        <end position="502"/>
    </location>
</feature>
<feature type="strand" evidence="22">
    <location>
        <begin position="505"/>
        <end position="508"/>
    </location>
</feature>
<feature type="strand" evidence="20">
    <location>
        <begin position="509"/>
        <end position="511"/>
    </location>
</feature>
<feature type="strand" evidence="22">
    <location>
        <begin position="518"/>
        <end position="520"/>
    </location>
</feature>
<feature type="helix" evidence="21">
    <location>
        <begin position="529"/>
        <end position="531"/>
    </location>
</feature>
<feature type="strand" evidence="20">
    <location>
        <begin position="532"/>
        <end position="534"/>
    </location>
</feature>
<feature type="strand" evidence="21">
    <location>
        <begin position="540"/>
        <end position="551"/>
    </location>
</feature>
<feature type="strand" evidence="18">
    <location>
        <begin position="553"/>
        <end position="555"/>
    </location>
</feature>
<feature type="strand" evidence="21">
    <location>
        <begin position="556"/>
        <end position="563"/>
    </location>
</feature>
<feature type="turn" evidence="21">
    <location>
        <begin position="565"/>
        <end position="567"/>
    </location>
</feature>
<feature type="strand" evidence="21">
    <location>
        <begin position="570"/>
        <end position="574"/>
    </location>
</feature>
<feature type="strand" evidence="21">
    <location>
        <begin position="577"/>
        <end position="581"/>
    </location>
</feature>
<feature type="helix" evidence="21">
    <location>
        <begin position="583"/>
        <end position="585"/>
    </location>
</feature>
<feature type="strand" evidence="21">
    <location>
        <begin position="591"/>
        <end position="598"/>
    </location>
</feature>
<feature type="sequence conflict" description="In Ref. 7; AAH41366." evidence="16" ref="7">
    <original>Y</original>
    <variation>S</variation>
    <location sequence="O75604-3">
        <position position="10"/>
    </location>
</feature>
<dbReference type="EC" id="3.4.19.12"/>
<dbReference type="EMBL" id="AF079564">
    <property type="protein sequence ID" value="AAC28392.1"/>
    <property type="molecule type" value="mRNA"/>
</dbReference>
<dbReference type="EMBL" id="AF440755">
    <property type="protein sequence ID" value="AAN65363.1"/>
    <property type="molecule type" value="mRNA"/>
</dbReference>
<dbReference type="EMBL" id="AK057225">
    <property type="protein sequence ID" value="BAB71388.1"/>
    <property type="molecule type" value="mRNA"/>
</dbReference>
<dbReference type="EMBL" id="AK292255">
    <property type="protein sequence ID" value="BAF84944.1"/>
    <property type="molecule type" value="mRNA"/>
</dbReference>
<dbReference type="EMBL" id="EF445044">
    <property type="protein sequence ID" value="ACA06096.1"/>
    <property type="molecule type" value="Genomic_DNA"/>
</dbReference>
<dbReference type="EMBL" id="EF445044">
    <property type="protein sequence ID" value="ACA06097.1"/>
    <property type="molecule type" value="Genomic_DNA"/>
</dbReference>
<dbReference type="EMBL" id="AP003396">
    <property type="status" value="NOT_ANNOTATED_CDS"/>
    <property type="molecule type" value="Genomic_DNA"/>
</dbReference>
<dbReference type="EMBL" id="CH471065">
    <property type="protein sequence ID" value="EAW67484.1"/>
    <property type="molecule type" value="Genomic_DNA"/>
</dbReference>
<dbReference type="EMBL" id="CH471065">
    <property type="protein sequence ID" value="EAW67485.1"/>
    <property type="molecule type" value="Genomic_DNA"/>
</dbReference>
<dbReference type="EMBL" id="CH471065">
    <property type="protein sequence ID" value="EAW67486.1"/>
    <property type="molecule type" value="Genomic_DNA"/>
</dbReference>
<dbReference type="EMBL" id="BC002854">
    <property type="protein sequence ID" value="AAH02854.1"/>
    <property type="molecule type" value="mRNA"/>
</dbReference>
<dbReference type="EMBL" id="BC002955">
    <property type="protein sequence ID" value="AAH02955.1"/>
    <property type="molecule type" value="mRNA"/>
</dbReference>
<dbReference type="EMBL" id="BC041366">
    <property type="protein sequence ID" value="AAH41366.1"/>
    <property type="molecule type" value="mRNA"/>
</dbReference>
<dbReference type="CCDS" id="CCDS58189.1">
    <molecule id="O75604-3"/>
</dbReference>
<dbReference type="CCDS" id="CCDS8422.1">
    <molecule id="O75604-1"/>
</dbReference>
<dbReference type="CCDS" id="CCDS8423.1">
    <molecule id="O75604-4"/>
</dbReference>
<dbReference type="RefSeq" id="NP_001230688.1">
    <molecule id="O75604-3"/>
    <property type="nucleotide sequence ID" value="NM_001243759.2"/>
</dbReference>
<dbReference type="RefSeq" id="NP_004196.4">
    <molecule id="O75604-1"/>
    <property type="nucleotide sequence ID" value="NM_004205.4"/>
</dbReference>
<dbReference type="RefSeq" id="NP_741994.1">
    <molecule id="O75604-4"/>
    <property type="nucleotide sequence ID" value="NM_171997.3"/>
</dbReference>
<dbReference type="RefSeq" id="XP_005271778.1">
    <molecule id="O75604-1"/>
    <property type="nucleotide sequence ID" value="XM_005271721.6"/>
</dbReference>
<dbReference type="RefSeq" id="XP_005271779.1">
    <molecule id="O75604-1"/>
    <property type="nucleotide sequence ID" value="XM_005271722.3"/>
</dbReference>
<dbReference type="RefSeq" id="XP_054226438.1">
    <molecule id="O75604-1"/>
    <property type="nucleotide sequence ID" value="XM_054370463.1"/>
</dbReference>
<dbReference type="RefSeq" id="XP_054226439.1">
    <molecule id="O75604-1"/>
    <property type="nucleotide sequence ID" value="XM_054370464.1"/>
</dbReference>
<dbReference type="PDB" id="2HD5">
    <property type="method" value="X-ray"/>
    <property type="resolution" value="1.85 A"/>
    <property type="chains" value="A=258-605"/>
</dbReference>
<dbReference type="PDB" id="2IBI">
    <property type="method" value="X-ray"/>
    <property type="resolution" value="2.20 A"/>
    <property type="chains" value="A=251-605"/>
</dbReference>
<dbReference type="PDB" id="3NHE">
    <property type="method" value="X-ray"/>
    <property type="resolution" value="1.26 A"/>
    <property type="chains" value="A=258-605"/>
</dbReference>
<dbReference type="PDB" id="3V6C">
    <property type="method" value="X-ray"/>
    <property type="resolution" value="1.70 A"/>
    <property type="chains" value="A=258-605"/>
</dbReference>
<dbReference type="PDB" id="3V6E">
    <property type="method" value="X-ray"/>
    <property type="resolution" value="2.10 A"/>
    <property type="chains" value="A=258-605"/>
</dbReference>
<dbReference type="PDB" id="5XU8">
    <property type="method" value="X-ray"/>
    <property type="resolution" value="1.81 A"/>
    <property type="chains" value="A=258-605"/>
</dbReference>
<dbReference type="PDB" id="5XVE">
    <property type="method" value="X-ray"/>
    <property type="resolution" value="1.24 A"/>
    <property type="chains" value="A=258-605"/>
</dbReference>
<dbReference type="PDB" id="6DGF">
    <property type="method" value="X-ray"/>
    <property type="resolution" value="2.34 A"/>
    <property type="chains" value="A=250-605"/>
</dbReference>
<dbReference type="PDBsum" id="2HD5"/>
<dbReference type="PDBsum" id="2IBI"/>
<dbReference type="PDBsum" id="3NHE"/>
<dbReference type="PDBsum" id="3V6C"/>
<dbReference type="PDBsum" id="3V6E"/>
<dbReference type="PDBsum" id="5XU8"/>
<dbReference type="PDBsum" id="5XVE"/>
<dbReference type="PDBsum" id="6DGF"/>
<dbReference type="SMR" id="O75604"/>
<dbReference type="BioGRID" id="114553">
    <property type="interactions" value="244"/>
</dbReference>
<dbReference type="CORUM" id="O75604"/>
<dbReference type="DIP" id="DIP-29134N"/>
<dbReference type="FunCoup" id="O75604">
    <property type="interactions" value="1134"/>
</dbReference>
<dbReference type="IntAct" id="O75604">
    <property type="interactions" value="139"/>
</dbReference>
<dbReference type="MINT" id="O75604"/>
<dbReference type="STRING" id="9606.ENSP00000260187"/>
<dbReference type="BindingDB" id="O75604"/>
<dbReference type="ChEMBL" id="CHEMBL1293227"/>
<dbReference type="GuidetoPHARMACOLOGY" id="2430"/>
<dbReference type="MEROPS" id="C19.013"/>
<dbReference type="MoonDB" id="O75604">
    <property type="type" value="Predicted"/>
</dbReference>
<dbReference type="GlyGen" id="O75604">
    <property type="glycosylation" value="1 site, 1 O-linked glycan (1 site)"/>
</dbReference>
<dbReference type="iPTMnet" id="O75604"/>
<dbReference type="PhosphoSitePlus" id="O75604"/>
<dbReference type="BioMuta" id="USP2"/>
<dbReference type="MassIVE" id="O75604"/>
<dbReference type="PaxDb" id="9606-ENSP00000260187"/>
<dbReference type="PeptideAtlas" id="O75604"/>
<dbReference type="ProteomicsDB" id="22761"/>
<dbReference type="ProteomicsDB" id="50112">
    <molecule id="O75604-1"/>
</dbReference>
<dbReference type="ProteomicsDB" id="50113">
    <molecule id="O75604-2"/>
</dbReference>
<dbReference type="ProteomicsDB" id="50114">
    <molecule id="O75604-3"/>
</dbReference>
<dbReference type="ProteomicsDB" id="50115">
    <molecule id="O75604-4"/>
</dbReference>
<dbReference type="Antibodypedia" id="1707">
    <property type="antibodies" value="417 antibodies from 32 providers"/>
</dbReference>
<dbReference type="DNASU" id="9099"/>
<dbReference type="Ensembl" id="ENST00000260187.7">
    <molecule id="O75604-1"/>
    <property type="protein sequence ID" value="ENSP00000260187.2"/>
    <property type="gene ID" value="ENSG00000036672.16"/>
</dbReference>
<dbReference type="Ensembl" id="ENST00000455332.6">
    <molecule id="O75604-3"/>
    <property type="protein sequence ID" value="ENSP00000407842.2"/>
    <property type="gene ID" value="ENSG00000036672.16"/>
</dbReference>
<dbReference type="Ensembl" id="ENST00000525735.1">
    <molecule id="O75604-4"/>
    <property type="protein sequence ID" value="ENSP00000436952.1"/>
    <property type="gene ID" value="ENSG00000036672.16"/>
</dbReference>
<dbReference type="GeneID" id="9099"/>
<dbReference type="KEGG" id="hsa:9099"/>
<dbReference type="MANE-Select" id="ENST00000260187.7">
    <property type="protein sequence ID" value="ENSP00000260187.2"/>
    <property type="RefSeq nucleotide sequence ID" value="NM_004205.5"/>
    <property type="RefSeq protein sequence ID" value="NP_004196.4"/>
</dbReference>
<dbReference type="UCSC" id="uc001pwl.5">
    <molecule id="O75604-1"/>
    <property type="organism name" value="human"/>
</dbReference>
<dbReference type="AGR" id="HGNC:12618"/>
<dbReference type="CTD" id="9099"/>
<dbReference type="DisGeNET" id="9099"/>
<dbReference type="GeneCards" id="USP2"/>
<dbReference type="HGNC" id="HGNC:12618">
    <property type="gene designation" value="USP2"/>
</dbReference>
<dbReference type="HPA" id="ENSG00000036672">
    <property type="expression patterns" value="Tissue enhanced (skeletal)"/>
</dbReference>
<dbReference type="MIM" id="604725">
    <property type="type" value="gene"/>
</dbReference>
<dbReference type="neXtProt" id="NX_O75604"/>
<dbReference type="OpenTargets" id="ENSG00000036672"/>
<dbReference type="PharmGKB" id="PA37244"/>
<dbReference type="VEuPathDB" id="HostDB:ENSG00000036672"/>
<dbReference type="eggNOG" id="KOG1868">
    <property type="taxonomic scope" value="Eukaryota"/>
</dbReference>
<dbReference type="GeneTree" id="ENSGT00940000161289"/>
<dbReference type="HOGENOM" id="CLU_008279_1_2_1"/>
<dbReference type="InParanoid" id="O75604"/>
<dbReference type="OMA" id="QQANKAW"/>
<dbReference type="OrthoDB" id="265306at2759"/>
<dbReference type="PAN-GO" id="O75604">
    <property type="GO annotations" value="1 GO annotation based on evolutionary models"/>
</dbReference>
<dbReference type="PhylomeDB" id="O75604"/>
<dbReference type="TreeFam" id="TF106277"/>
<dbReference type="PathwayCommons" id="O75604"/>
<dbReference type="Reactome" id="R-HSA-5357786">
    <property type="pathway name" value="TNFR1-induced proapoptotic signaling"/>
</dbReference>
<dbReference type="Reactome" id="R-HSA-5357905">
    <property type="pathway name" value="Regulation of TNFR1 signaling"/>
</dbReference>
<dbReference type="Reactome" id="R-HSA-5357956">
    <property type="pathway name" value="TNFR1-induced NF-kappa-B signaling pathway"/>
</dbReference>
<dbReference type="Reactome" id="R-HSA-5689880">
    <property type="pathway name" value="Ub-specific processing proteases"/>
</dbReference>
<dbReference type="Reactome" id="R-HSA-6804757">
    <property type="pathway name" value="Regulation of TP53 Degradation"/>
</dbReference>
<dbReference type="SignaLink" id="O75604"/>
<dbReference type="SIGNOR" id="O75604"/>
<dbReference type="BioGRID-ORCS" id="9099">
    <property type="hits" value="13 hits in 1203 CRISPR screens"/>
</dbReference>
<dbReference type="CD-CODE" id="8C2F96ED">
    <property type="entry name" value="Centrosome"/>
</dbReference>
<dbReference type="ChiTaRS" id="USP2">
    <property type="organism name" value="human"/>
</dbReference>
<dbReference type="EvolutionaryTrace" id="O75604"/>
<dbReference type="GeneWiki" id="USP2"/>
<dbReference type="GenomeRNAi" id="9099"/>
<dbReference type="Pharos" id="O75604">
    <property type="development level" value="Tbio"/>
</dbReference>
<dbReference type="PRO" id="PR:O75604"/>
<dbReference type="Proteomes" id="UP000005640">
    <property type="component" value="Chromosome 11"/>
</dbReference>
<dbReference type="RNAct" id="O75604">
    <property type="molecule type" value="protein"/>
</dbReference>
<dbReference type="Bgee" id="ENSG00000036672">
    <property type="expression patterns" value="Expressed in hindlimb stylopod muscle and 156 other cell types or tissues"/>
</dbReference>
<dbReference type="ExpressionAtlas" id="O75604">
    <property type="expression patterns" value="baseline and differential"/>
</dbReference>
<dbReference type="GO" id="GO:0005813">
    <property type="term" value="C:centrosome"/>
    <property type="evidence" value="ECO:0007669"/>
    <property type="project" value="Ensembl"/>
</dbReference>
<dbReference type="GO" id="GO:0005737">
    <property type="term" value="C:cytoplasm"/>
    <property type="evidence" value="ECO:0000318"/>
    <property type="project" value="GO_Central"/>
</dbReference>
<dbReference type="GO" id="GO:0016020">
    <property type="term" value="C:membrane"/>
    <property type="evidence" value="ECO:0007669"/>
    <property type="project" value="UniProtKB-SubCell"/>
</dbReference>
<dbReference type="GO" id="GO:0005654">
    <property type="term" value="C:nucleoplasm"/>
    <property type="evidence" value="ECO:0000304"/>
    <property type="project" value="Reactome"/>
</dbReference>
<dbReference type="GO" id="GO:0048471">
    <property type="term" value="C:perinuclear region of cytoplasm"/>
    <property type="evidence" value="ECO:0007669"/>
    <property type="project" value="UniProtKB-SubCell"/>
</dbReference>
<dbReference type="GO" id="GO:0030332">
    <property type="term" value="F:cyclin binding"/>
    <property type="evidence" value="ECO:0000353"/>
    <property type="project" value="UniProtKB"/>
</dbReference>
<dbReference type="GO" id="GO:0004843">
    <property type="term" value="F:cysteine-type deubiquitinase activity"/>
    <property type="evidence" value="ECO:0000314"/>
    <property type="project" value="FlyBase"/>
</dbReference>
<dbReference type="GO" id="GO:0004197">
    <property type="term" value="F:cysteine-type endopeptidase activity"/>
    <property type="evidence" value="ECO:0000304"/>
    <property type="project" value="ProtInc"/>
</dbReference>
<dbReference type="GO" id="GO:0042802">
    <property type="term" value="F:identical protein binding"/>
    <property type="evidence" value="ECO:0007669"/>
    <property type="project" value="Ensembl"/>
</dbReference>
<dbReference type="GO" id="GO:0046872">
    <property type="term" value="F:metal ion binding"/>
    <property type="evidence" value="ECO:0007669"/>
    <property type="project" value="UniProtKB-KW"/>
</dbReference>
<dbReference type="GO" id="GO:0031625">
    <property type="term" value="F:ubiquitin protein ligase binding"/>
    <property type="evidence" value="ECO:0000353"/>
    <property type="project" value="UniProtKB"/>
</dbReference>
<dbReference type="GO" id="GO:0048512">
    <property type="term" value="P:circadian behavior"/>
    <property type="evidence" value="ECO:0000250"/>
    <property type="project" value="UniProtKB"/>
</dbReference>
<dbReference type="GO" id="GO:0032922">
    <property type="term" value="P:circadian regulation of gene expression"/>
    <property type="evidence" value="ECO:0000250"/>
    <property type="project" value="UniProtKB"/>
</dbReference>
<dbReference type="GO" id="GO:0043153">
    <property type="term" value="P:entrainment of circadian clock by photoperiod"/>
    <property type="evidence" value="ECO:0000250"/>
    <property type="project" value="UniProtKB"/>
</dbReference>
<dbReference type="GO" id="GO:0045475">
    <property type="term" value="P:locomotor rhythm"/>
    <property type="evidence" value="ECO:0000250"/>
    <property type="project" value="UniProtKB"/>
</dbReference>
<dbReference type="GO" id="GO:0007517">
    <property type="term" value="P:muscle organ development"/>
    <property type="evidence" value="ECO:0007669"/>
    <property type="project" value="UniProtKB-KW"/>
</dbReference>
<dbReference type="GO" id="GO:0000122">
    <property type="term" value="P:negative regulation of transcription by RNA polymerase II"/>
    <property type="evidence" value="ECO:0000315"/>
    <property type="project" value="UniProtKB"/>
</dbReference>
<dbReference type="GO" id="GO:0045931">
    <property type="term" value="P:positive regulation of mitotic cell cycle"/>
    <property type="evidence" value="ECO:0000315"/>
    <property type="project" value="UniProtKB"/>
</dbReference>
<dbReference type="GO" id="GO:0016579">
    <property type="term" value="P:protein deubiquitination"/>
    <property type="evidence" value="ECO:0000314"/>
    <property type="project" value="UniProtKB"/>
</dbReference>
<dbReference type="GO" id="GO:0050821">
    <property type="term" value="P:protein stabilization"/>
    <property type="evidence" value="ECO:0000314"/>
    <property type="project" value="UniProtKB"/>
</dbReference>
<dbReference type="GO" id="GO:0006508">
    <property type="term" value="P:proteolysis"/>
    <property type="evidence" value="ECO:0007669"/>
    <property type="project" value="UniProtKB-KW"/>
</dbReference>
<dbReference type="GO" id="GO:1901796">
    <property type="term" value="P:regulation of signal transduction by p53 class mediator"/>
    <property type="evidence" value="ECO:0000304"/>
    <property type="project" value="Reactome"/>
</dbReference>
<dbReference type="CDD" id="cd02674">
    <property type="entry name" value="Peptidase_C19R"/>
    <property type="match status" value="1"/>
</dbReference>
<dbReference type="FunFam" id="3.90.70.10:FF:000024">
    <property type="entry name" value="Ubiquitin carboxyl-terminal hydrolase 2"/>
    <property type="match status" value="1"/>
</dbReference>
<dbReference type="Gene3D" id="3.90.70.10">
    <property type="entry name" value="Cysteine proteinases"/>
    <property type="match status" value="1"/>
</dbReference>
<dbReference type="InterPro" id="IPR038765">
    <property type="entry name" value="Papain-like_cys_pep_sf"/>
</dbReference>
<dbReference type="InterPro" id="IPR001394">
    <property type="entry name" value="Peptidase_C19_UCH"/>
</dbReference>
<dbReference type="InterPro" id="IPR050185">
    <property type="entry name" value="Ub_carboxyl-term_hydrolase"/>
</dbReference>
<dbReference type="InterPro" id="IPR018200">
    <property type="entry name" value="USP_CS"/>
</dbReference>
<dbReference type="InterPro" id="IPR028889">
    <property type="entry name" value="USP_dom"/>
</dbReference>
<dbReference type="PANTHER" id="PTHR21646">
    <property type="entry name" value="UBIQUITIN CARBOXYL-TERMINAL HYDROLASE"/>
    <property type="match status" value="1"/>
</dbReference>
<dbReference type="PANTHER" id="PTHR21646:SF17">
    <property type="entry name" value="UBIQUITIN CARBOXYL-TERMINAL HYDROLASE 2"/>
    <property type="match status" value="1"/>
</dbReference>
<dbReference type="Pfam" id="PF00443">
    <property type="entry name" value="UCH"/>
    <property type="match status" value="1"/>
</dbReference>
<dbReference type="SUPFAM" id="SSF54001">
    <property type="entry name" value="Cysteine proteinases"/>
    <property type="match status" value="1"/>
</dbReference>
<dbReference type="PROSITE" id="PS00972">
    <property type="entry name" value="USP_1"/>
    <property type="match status" value="1"/>
</dbReference>
<dbReference type="PROSITE" id="PS00973">
    <property type="entry name" value="USP_2"/>
    <property type="match status" value="1"/>
</dbReference>
<dbReference type="PROSITE" id="PS50235">
    <property type="entry name" value="USP_3"/>
    <property type="match status" value="1"/>
</dbReference>
<proteinExistence type="evidence at protein level"/>
<accession>O75604</accession>
<accession>B0YJB8</accession>
<accession>E9PPM2</accession>
<accession>Q8IUM2</accession>
<accession>Q8IW04</accession>
<accession>Q96MB9</accession>
<accession>Q9BQ21</accession>
<sequence>MSQLSSTLKRYTESARYTDAHYAKSGYGAYTPSSYGANLAASLLEKEKLGFKPVPTSSFLTRPRTYGPSSLLDYDRGRPLLRPDITGGGKRAESQTRGTERPLGSGLSGGSGFPYGVTNNCLSYLPINAYDQGVTLTQKLDSQSDLARDFSSLRTSDSYRIDPRNLGRSPMLARTRKELCTLQGLYQTASCPEYLVDYLENYGRKGSASQVPSQAPPSRVPEIISPTYRPIGRYTLWETGKGQAPGPSRSSSPGRDGMNSKSAQGLAGLRNLGNTCFMNSILQCLSNTRELRDYCLQRLYMRDLHHGSNAHTALVEEFAKLIQTIWTSSPNDVVSPSEFKTQIQRYAPRFVGYNQQDAQEFLRFLLDGLHNEVNRVTLRPKSNPENLDHLPDDEKGRQMWRKYLEREDSRIGDLFVGQLKSSLTCTDCGYCSTVFDPFWDLSLPIAKRGYPEVTLMDCMRLFTKEDVLDGDEKPTCCRCRGRKRCIKKFSIQRFPKILVLHLKRFSESRIRTSKLTTFVNFPLRDLDLREFASENTNHAVYNLYAVSNHSGTTMGGHYTAYCRSPGTGEWHTFNDSSVTPMSSSQVRTSDAYLLFYELASPPSRM</sequence>
<organism>
    <name type="scientific">Homo sapiens</name>
    <name type="common">Human</name>
    <dbReference type="NCBI Taxonomy" id="9606"/>
    <lineage>
        <taxon>Eukaryota</taxon>
        <taxon>Metazoa</taxon>
        <taxon>Chordata</taxon>
        <taxon>Craniata</taxon>
        <taxon>Vertebrata</taxon>
        <taxon>Euteleostomi</taxon>
        <taxon>Mammalia</taxon>
        <taxon>Eutheria</taxon>
        <taxon>Euarchontoglires</taxon>
        <taxon>Primates</taxon>
        <taxon>Haplorrhini</taxon>
        <taxon>Catarrhini</taxon>
        <taxon>Hominidae</taxon>
        <taxon>Homo</taxon>
    </lineage>
</organism>
<protein>
    <recommendedName>
        <fullName>Ubiquitin carboxyl-terminal hydrolase 2</fullName>
        <ecNumber>3.4.19.12</ecNumber>
    </recommendedName>
    <alternativeName>
        <fullName>41 kDa ubiquitin-specific protease</fullName>
    </alternativeName>
    <alternativeName>
        <fullName>Deubiquitinating enzyme 2</fullName>
    </alternativeName>
    <alternativeName>
        <fullName>Ubiquitin thioesterase 2</fullName>
    </alternativeName>
    <alternativeName>
        <fullName>Ubiquitin-specific-processing protease 2</fullName>
    </alternativeName>
</protein>
<keyword id="KW-0002">3D-structure</keyword>
<keyword id="KW-0025">Alternative splicing</keyword>
<keyword id="KW-0090">Biological rhythms</keyword>
<keyword id="KW-0131">Cell cycle</keyword>
<keyword id="KW-0963">Cytoplasm</keyword>
<keyword id="KW-0378">Hydrolase</keyword>
<keyword id="KW-0472">Membrane</keyword>
<keyword id="KW-0479">Metal-binding</keyword>
<keyword id="KW-0517">Myogenesis</keyword>
<keyword id="KW-0539">Nucleus</keyword>
<keyword id="KW-0645">Protease</keyword>
<keyword id="KW-1267">Proteomics identification</keyword>
<keyword id="KW-1185">Reference proteome</keyword>
<keyword id="KW-0788">Thiol protease</keyword>
<keyword id="KW-0833">Ubl conjugation pathway</keyword>
<keyword id="KW-0862">Zinc</keyword>
<gene>
    <name type="primary">USP2</name>
    <name type="synonym">UBP41</name>
</gene>
<comment type="function">
    <text evidence="1 2 7 8 9">Hydrolase that deubiquitinates polyubiquitinated target proteins such as MDM2, MDM4 and CCND1 (PubMed:17290220, PubMed:19838211, PubMed:19917254). Isoform 1 and isoform 4 possess both ubiquitin-specific peptidase and isopeptidase activities (By similarity). Deubiquitinates MDM2 without reversing MDM2-mediated p53/TP53 ubiquitination and thus indirectly promotes p53/TP53 degradation and limits p53 activity (PubMed:17290220, PubMed:19838211). Has no deubiquitinase activity against p53/TP53 (PubMed:17290220). Prevents MDM2-mediated degradation of MDM4 (PubMed:17290220). Plays a role in the G1/S cell-cycle progression in normal and cancer cells (PubMed:19917254). Regulates the circadian clock by modulating its intrinsic circadian rhythm and its capacity to respond to external cues (By similarity). Associates with clock proteins and deubiquitinates core clock component PER1 but does not affect its overall stability (By similarity). Regulates the nucleocytoplasmic shuttling and nuclear retention of PER1 and its repressive role on the clock transcription factors CLOCK and BMAL1 (By similarity). Plays a role in the regulation of myogenic differentiation of embryonic muscle cells (By similarity).</text>
</comment>
<comment type="function">
    <molecule>Isoform 4</molecule>
    <text evidence="1">Circadian clock output effector that regulates Ca(2+) absorption in the small intestine. Probably functions by regulating protein levels of the membrane scaffold protein NHERF4 in a rhythmic manner, and is therefore likely to control Ca(2+) membrane permeability mediated by the Ca(2+) channel TRPV6 in the intestine.</text>
</comment>
<comment type="catalytic activity">
    <reaction>
        <text>Thiol-dependent hydrolysis of ester, thioester, amide, peptide and isopeptide bonds formed by the C-terminal Gly of ubiquitin (a 76-residue protein attached to proteins as an intracellular targeting signal).</text>
        <dbReference type="EC" id="3.4.19.12"/>
    </reaction>
</comment>
<comment type="activity regulation">
    <text evidence="6">Cleavage is inhibited by ubiquitin in a dosage-dependent manner. Cleavage is blocked by ubiquitin aldehyde.</text>
</comment>
<comment type="subunit">
    <text evidence="1 2 7 8 9 11">Homooligomer (By similarity). Found in trimeric complex with MDM2 and MDM4 and USP2. Interacts with CCND1; the interaction is direct and promotes its stabilization by antagonizing ubiquitin-dependent degradation. Interacts (via N-terminus and C-terminus) with MDM2. Interacts with MDM4. Interacts with PER1 (By similarity). Interacts with KCNQ1; counteracts the NEDD4L-specific down-regulation of I(Ks) and restore plasma membrane localization of KCNQ1 (PubMed:22024150). Isoform 4: Interacts with NHERF4 and CLTC (By similarity).</text>
</comment>
<comment type="interaction">
    <interactant intactId="EBI-743272">
        <id>O75604</id>
    </interactant>
    <interactant intactId="EBI-11096309">
        <id>Q9NYB9-2</id>
        <label>ABI2</label>
    </interactant>
    <organismsDiffer>false</organismsDiffer>
    <experiments>3</experiments>
</comment>
<comment type="interaction">
    <interactant intactId="EBI-743272">
        <id>O75604</id>
    </interactant>
    <interactant intactId="EBI-351710">
        <id>P12814</id>
        <label>ACTN1</label>
    </interactant>
    <organismsDiffer>false</organismsDiffer>
    <experiments>3</experiments>
</comment>
<comment type="interaction">
    <interactant intactId="EBI-743272">
        <id>O75604</id>
    </interactant>
    <interactant intactId="EBI-77797">
        <id>P35609</id>
        <label>ACTN2</label>
    </interactant>
    <organismsDiffer>false</organismsDiffer>
    <experiments>3</experiments>
</comment>
<comment type="interaction">
    <interactant intactId="EBI-743272">
        <id>O75604</id>
    </interactant>
    <interactant intactId="EBI-2880652">
        <id>Q08043</id>
        <label>ACTN3</label>
    </interactant>
    <organismsDiffer>false</organismsDiffer>
    <experiments>3</experiments>
</comment>
<comment type="interaction">
    <interactant intactId="EBI-743272">
        <id>O75604</id>
    </interactant>
    <interactant intactId="EBI-19946665">
        <id>Q86U10</id>
        <label>ASPG</label>
    </interactant>
    <organismsDiffer>false</organismsDiffer>
    <experiments>3</experiments>
</comment>
<comment type="interaction">
    <interactant intactId="EBI-743272">
        <id>O75604</id>
    </interactant>
    <interactant intactId="EBI-11954292">
        <id>Q86V38</id>
        <label>ATN1</label>
    </interactant>
    <organismsDiffer>false</organismsDiffer>
    <experiments>3</experiments>
</comment>
<comment type="interaction">
    <interactant intactId="EBI-743272">
        <id>O75604</id>
    </interactant>
    <interactant intactId="EBI-702093">
        <id>P56945</id>
        <label>BCAR1</label>
    </interactant>
    <organismsDiffer>false</organismsDiffer>
    <experiments>3</experiments>
</comment>
<comment type="interaction">
    <interactant intactId="EBI-743272">
        <id>O75604</id>
    </interactant>
    <interactant intactId="EBI-11975051">
        <id>Q8TD16-2</id>
        <label>BICD2</label>
    </interactant>
    <organismsDiffer>false</organismsDiffer>
    <experiments>3</experiments>
</comment>
<comment type="interaction">
    <interactant intactId="EBI-743272">
        <id>O75604</id>
    </interactant>
    <interactant intactId="EBI-517623">
        <id>Q96CA5</id>
        <label>BIRC7</label>
    </interactant>
    <organismsDiffer>false</organismsDiffer>
    <experiments>3</experiments>
</comment>
<comment type="interaction">
    <interactant intactId="EBI-743272">
        <id>O75604</id>
    </interactant>
    <interactant intactId="EBI-10179719">
        <id>A2RRN7</id>
        <label>CADPS</label>
    </interactant>
    <organismsDiffer>false</organismsDiffer>
    <experiments>3</experiments>
</comment>
<comment type="interaction">
    <interactant intactId="EBI-743272">
        <id>O75604</id>
    </interactant>
    <interactant intactId="EBI-739580">
        <id>Q13137</id>
        <label>CALCOCO2</label>
    </interactant>
    <organismsDiffer>false</organismsDiffer>
    <experiments>3</experiments>
</comment>
<comment type="interaction">
    <interactant intactId="EBI-743272">
        <id>O75604</id>
    </interactant>
    <interactant intactId="EBI-11530605">
        <id>Q9H257-2</id>
        <label>CARD9</label>
    </interactant>
    <organismsDiffer>false</organismsDiffer>
    <experiments>3</experiments>
</comment>
<comment type="interaction">
    <interactant intactId="EBI-743272">
        <id>O75604</id>
    </interactant>
    <interactant intactId="EBI-10171416">
        <id>Q96JN2-2</id>
        <label>CCDC136</label>
    </interactant>
    <organismsDiffer>false</organismsDiffer>
    <experiments>3</experiments>
</comment>
<comment type="interaction">
    <interactant intactId="EBI-743272">
        <id>O75604</id>
    </interactant>
    <interactant intactId="EBI-2808286">
        <id>Q2TAC2</id>
        <label>CCDC57</label>
    </interactant>
    <organismsDiffer>false</organismsDiffer>
    <experiments>3</experiments>
</comment>
<comment type="interaction">
    <interactant intactId="EBI-743272">
        <id>O75604</id>
    </interactant>
    <interactant intactId="EBI-347573">
        <id>A6NC98</id>
        <label>CCDC88B</label>
    </interactant>
    <organismsDiffer>false</organismsDiffer>
    <experiments>3</experiments>
</comment>
<comment type="interaction">
    <interactant intactId="EBI-743272">
        <id>O75604</id>
    </interactant>
    <interactant intactId="EBI-11522539">
        <id>Q96MT8-3</id>
        <label>CEP63</label>
    </interactant>
    <organismsDiffer>false</organismsDiffer>
    <experiments>3</experiments>
</comment>
<comment type="interaction">
    <interactant intactId="EBI-743272">
        <id>O75604</id>
    </interactant>
    <interactant intactId="EBI-739624">
        <id>Q8NHQ1</id>
        <label>CEP70</label>
    </interactant>
    <organismsDiffer>false</organismsDiffer>
    <experiments>3</experiments>
</comment>
<comment type="interaction">
    <interactant intactId="EBI-743272">
        <id>O75604</id>
    </interactant>
    <interactant intactId="EBI-739773">
        <id>Q9BSW2</id>
        <label>CRACR2A</label>
    </interactant>
    <organismsDiffer>false</organismsDiffer>
    <experiments>3</experiments>
</comment>
<comment type="interaction">
    <interactant intactId="EBI-743272">
        <id>O75604</id>
    </interactant>
    <interactant intactId="EBI-11982645">
        <id>Q8N4Y2-3</id>
        <label>CRACR2B</label>
    </interactant>
    <organismsDiffer>false</organismsDiffer>
    <experiments>3</experiments>
</comment>
<comment type="interaction">
    <interactant intactId="EBI-743272">
        <id>O75604</id>
    </interactant>
    <interactant intactId="EBI-748248">
        <id>Q8WTU0</id>
        <label>DDI1</label>
    </interactant>
    <organismsDiffer>false</organismsDiffer>
    <experiments>3</experiments>
</comment>
<comment type="interaction">
    <interactant intactId="EBI-743272">
        <id>O75604</id>
    </interactant>
    <interactant intactId="EBI-12366971">
        <id>O75140-2</id>
        <label>DEPDC5</label>
    </interactant>
    <organismsDiffer>false</organismsDiffer>
    <experiments>3</experiments>
</comment>
<comment type="interaction">
    <interactant intactId="EBI-743272">
        <id>O75604</id>
    </interactant>
    <interactant intactId="EBI-11988027">
        <id>Q9NRI5-2</id>
        <label>DISC1</label>
    </interactant>
    <organismsDiffer>false</organismsDiffer>
    <experiments>3</experiments>
</comment>
<comment type="interaction">
    <interactant intactId="EBI-743272">
        <id>O75604</id>
    </interactant>
    <interactant intactId="EBI-2340258">
        <id>Q8N9I9</id>
        <label>DTX3</label>
    </interactant>
    <organismsDiffer>false</organismsDiffer>
    <experiments>3</experiments>
</comment>
<comment type="interaction">
    <interactant intactId="EBI-743272">
        <id>O75604</id>
    </interactant>
    <interactant intactId="EBI-7357329">
        <id>Q9H596</id>
        <label>DUSP21</label>
    </interactant>
    <organismsDiffer>false</organismsDiffer>
    <experiments>3</experiments>
</comment>
<comment type="interaction">
    <interactant intactId="EBI-743272">
        <id>O75604</id>
    </interactant>
    <interactant intactId="EBI-740680">
        <id>Q8WWB3</id>
        <label>DYDC1</label>
    </interactant>
    <organismsDiffer>false</organismsDiffer>
    <experiments>3</experiments>
</comment>
<comment type="interaction">
    <interactant intactId="EBI-743272">
        <id>O75604</id>
    </interactant>
    <interactant intactId="EBI-2349927">
        <id>Q5JST6</id>
        <label>EFHC2</label>
    </interactant>
    <organismsDiffer>false</organismsDiffer>
    <experiments>3</experiments>
</comment>
<comment type="interaction">
    <interactant intactId="EBI-743272">
        <id>O75604</id>
    </interactant>
    <interactant intactId="EBI-301024">
        <id>Q9NRA8</id>
        <label>EIF4ENIF1</label>
    </interactant>
    <organismsDiffer>false</organismsDiffer>
    <experiments>3</experiments>
</comment>
<comment type="interaction">
    <interactant intactId="EBI-743272">
        <id>O75604</id>
    </interactant>
    <interactant intactId="EBI-949824">
        <id>O00471</id>
        <label>EXOC5</label>
    </interactant>
    <organismsDiffer>false</organismsDiffer>
    <experiments>3</experiments>
</comment>
<comment type="interaction">
    <interactant intactId="EBI-743272">
        <id>O75604</id>
    </interactant>
    <interactant intactId="EBI-371922">
        <id>Q96B26</id>
        <label>EXOSC8</label>
    </interactant>
    <organismsDiffer>false</organismsDiffer>
    <experiments>3</experiments>
</comment>
<comment type="interaction">
    <interactant intactId="EBI-743272">
        <id>O75604</id>
    </interactant>
    <interactant intactId="EBI-356700">
        <id>P57678</id>
        <label>GEMIN4</label>
    </interactant>
    <organismsDiffer>false</organismsDiffer>
    <experiments>3</experiments>
</comment>
<comment type="interaction">
    <interactant intactId="EBI-743272">
        <id>O75604</id>
    </interactant>
    <interactant intactId="EBI-618309">
        <id>Q08379</id>
        <label>GOLGA2</label>
    </interactant>
    <organismsDiffer>false</organismsDiffer>
    <experiments>6</experiments>
</comment>
<comment type="interaction">
    <interactant intactId="EBI-743272">
        <id>O75604</id>
    </interactant>
    <interactant intactId="EBI-11163335">
        <id>Q9NYA3</id>
        <label>GOLGA6A</label>
    </interactant>
    <organismsDiffer>false</organismsDiffer>
    <experiments>3</experiments>
</comment>
<comment type="interaction">
    <interactant intactId="EBI-743272">
        <id>O75604</id>
    </interactant>
    <interactant intactId="EBI-5916454">
        <id>A6NEM1</id>
        <label>GOLGA6L9</label>
    </interactant>
    <organismsDiffer>false</organismsDiffer>
    <experiments>3</experiments>
</comment>
<comment type="interaction">
    <interactant intactId="EBI-743272">
        <id>O75604</id>
    </interactant>
    <interactant intactId="EBI-11519926">
        <id>Q6PI77</id>
        <label>GPRASP3</label>
    </interactant>
    <organismsDiffer>false</organismsDiffer>
    <experiments>3</experiments>
</comment>
<comment type="interaction">
    <interactant intactId="EBI-743272">
        <id>O75604</id>
    </interactant>
    <interactant intactId="EBI-11991632">
        <id>Q14451-3</id>
        <label>GRB7</label>
    </interactant>
    <organismsDiffer>false</organismsDiffer>
    <experiments>3</experiments>
</comment>
<comment type="interaction">
    <interactant intactId="EBI-743272">
        <id>O75604</id>
    </interactant>
    <interactant intactId="EBI-717919">
        <id>Q4V328</id>
        <label>GRIPAP1</label>
    </interactant>
    <organismsDiffer>false</organismsDiffer>
    <experiments>3</experiments>
</comment>
<comment type="interaction">
    <interactant intactId="EBI-743272">
        <id>O75604</id>
    </interactant>
    <interactant intactId="EBI-748420">
        <id>Q9NSC5</id>
        <label>HOMER3</label>
    </interactant>
    <organismsDiffer>false</organismsDiffer>
    <experiments>6</experiments>
</comment>
<comment type="interaction">
    <interactant intactId="EBI-743272">
        <id>O75604</id>
    </interactant>
    <interactant intactId="EBI-746704">
        <id>Q9UJC3</id>
        <label>HOOK1</label>
    </interactant>
    <organismsDiffer>false</organismsDiffer>
    <experiments>3</experiments>
</comment>
<comment type="interaction">
    <interactant intactId="EBI-743272">
        <id>O75604</id>
    </interactant>
    <interactant intactId="EBI-10961706">
        <id>Q96ED9-2</id>
        <label>HOOK2</label>
    </interactant>
    <organismsDiffer>false</organismsDiffer>
    <experiments>3</experiments>
</comment>
<comment type="interaction">
    <interactant intactId="EBI-743272">
        <id>O75604</id>
    </interactant>
    <interactant intactId="EBI-8638439">
        <id>Q8IYA8</id>
        <label>IHO1</label>
    </interactant>
    <organismsDiffer>false</organismsDiffer>
    <experiments>3</experiments>
</comment>
<comment type="interaction">
    <interactant intactId="EBI-743272">
        <id>O75604</id>
    </interactant>
    <interactant intactId="EBI-747204">
        <id>Q9UKT9</id>
        <label>IKZF3</label>
    </interactant>
    <organismsDiffer>false</organismsDiffer>
    <experiments>3</experiments>
</comment>
<comment type="interaction">
    <interactant intactId="EBI-743272">
        <id>O75604</id>
    </interactant>
    <interactant intactId="EBI-748258">
        <id>Q5TA45</id>
        <label>INTS11</label>
    </interactant>
    <organismsDiffer>false</organismsDiffer>
    <experiments>3</experiments>
</comment>
<comment type="interaction">
    <interactant intactId="EBI-743272">
        <id>O75604</id>
    </interactant>
    <interactant intactId="EBI-2680803">
        <id>Q96N16</id>
        <label>JAKMIP1</label>
    </interactant>
    <organismsDiffer>false</organismsDiffer>
    <experiments>3</experiments>
</comment>
<comment type="interaction">
    <interactant intactId="EBI-743272">
        <id>O75604</id>
    </interactant>
    <interactant intactId="EBI-17181882">
        <id>O75564-2</id>
        <label>JRK</label>
    </interactant>
    <organismsDiffer>false</organismsDiffer>
    <experiments>3</experiments>
</comment>
<comment type="interaction">
    <interactant intactId="EBI-743272">
        <id>O75604</id>
    </interactant>
    <interactant intactId="EBI-12024294">
        <id>Q674X7-2</id>
        <label>KAZN</label>
    </interactant>
    <organismsDiffer>false</organismsDiffer>
    <experiments>3</experiments>
</comment>
<comment type="interaction">
    <interactant intactId="EBI-743272">
        <id>O75604</id>
    </interactant>
    <interactant intactId="EBI-2125614">
        <id>Q9BVG8</id>
        <label>KIFC3</label>
    </interactant>
    <organismsDiffer>false</organismsDiffer>
    <experiments>3</experiments>
</comment>
<comment type="interaction">
    <interactant intactId="EBI-743272">
        <id>O75604</id>
    </interactant>
    <interactant intactId="EBI-14069005">
        <id>Q9BVG8-5</id>
        <label>KIFC3</label>
    </interactant>
    <organismsDiffer>false</organismsDiffer>
    <experiments>3</experiments>
</comment>
<comment type="interaction">
    <interactant intactId="EBI-743272">
        <id>O75604</id>
    </interactant>
    <interactant intactId="EBI-739566">
        <id>P19012</id>
        <label>KRT15</label>
    </interactant>
    <organismsDiffer>false</organismsDiffer>
    <experiments>5</experiments>
</comment>
<comment type="interaction">
    <interactant intactId="EBI-743272">
        <id>O75604</id>
    </interactant>
    <interactant intactId="EBI-3044087">
        <id>Q7Z3Y8</id>
        <label>KRT27</label>
    </interactant>
    <organismsDiffer>false</organismsDiffer>
    <experiments>3</experiments>
</comment>
<comment type="interaction">
    <interactant intactId="EBI-743272">
        <id>O75604</id>
    </interactant>
    <interactant intactId="EBI-948001">
        <id>Q15323</id>
        <label>KRT31</label>
    </interactant>
    <organismsDiffer>false</organismsDiffer>
    <experiments>3</experiments>
</comment>
<comment type="interaction">
    <interactant intactId="EBI-743272">
        <id>O75604</id>
    </interactant>
    <interactant intactId="EBI-1049638">
        <id>Q14525</id>
        <label>KRT33B</label>
    </interactant>
    <organismsDiffer>false</organismsDiffer>
    <experiments>3</experiments>
</comment>
<comment type="interaction">
    <interactant intactId="EBI-743272">
        <id>O75604</id>
    </interactant>
    <interactant intactId="EBI-1047093">
        <id>O76011</id>
        <label>KRT34</label>
    </interactant>
    <organismsDiffer>false</organismsDiffer>
    <experiments>3</experiments>
</comment>
<comment type="interaction">
    <interactant intactId="EBI-743272">
        <id>O75604</id>
    </interactant>
    <interactant intactId="EBI-1058674">
        <id>Q92764</id>
        <label>KRT35</label>
    </interactant>
    <organismsDiffer>false</organismsDiffer>
    <experiments>3</experiments>
</comment>
<comment type="interaction">
    <interactant intactId="EBI-743272">
        <id>O75604</id>
    </interactant>
    <interactant intactId="EBI-10171697">
        <id>Q6A162</id>
        <label>KRT40</label>
    </interactant>
    <organismsDiffer>false</organismsDiffer>
    <experiments>6</experiments>
</comment>
<comment type="interaction">
    <interactant intactId="EBI-743272">
        <id>O75604</id>
    </interactant>
    <interactant intactId="EBI-12039345">
        <id>Q9UBR4-2</id>
        <label>LHX3</label>
    </interactant>
    <organismsDiffer>false</organismsDiffer>
    <experiments>3</experiments>
</comment>
<comment type="interaction">
    <interactant intactId="EBI-743272">
        <id>O75604</id>
    </interactant>
    <interactant intactId="EBI-2865388">
        <id>Q969G2</id>
        <label>LHX4</label>
    </interactant>
    <organismsDiffer>false</organismsDiffer>
    <experiments>4</experiments>
</comment>
<comment type="interaction">
    <interactant intactId="EBI-743272">
        <id>O75604</id>
    </interactant>
    <interactant intactId="EBI-2830427">
        <id>Q03252</id>
        <label>LMNB2</label>
    </interactant>
    <organismsDiffer>false</organismsDiffer>
    <experiments>3</experiments>
</comment>
<comment type="interaction">
    <interactant intactId="EBI-743272">
        <id>O75604</id>
    </interactant>
    <interactant intactId="EBI-741037">
        <id>Q9BRK4</id>
        <label>LZTS2</label>
    </interactant>
    <organismsDiffer>false</organismsDiffer>
    <experiments>6</experiments>
</comment>
<comment type="interaction">
    <interactant intactId="EBI-743272">
        <id>O75604</id>
    </interactant>
    <interactant intactId="EBI-389668">
        <id>Q00987</id>
        <label>MDM2</label>
    </interactant>
    <organismsDiffer>false</organismsDiffer>
    <experiments>4</experiments>
</comment>
<comment type="interaction">
    <interactant intactId="EBI-743272">
        <id>O75604</id>
    </interactant>
    <interactant intactId="EBI-10172526">
        <id>Q9UJV3-2</id>
        <label>MID2</label>
    </interactant>
    <organismsDiffer>false</organismsDiffer>
    <experiments>3</experiments>
</comment>
<comment type="interaction">
    <interactant intactId="EBI-743272">
        <id>O75604</id>
    </interactant>
    <interactant intactId="EBI-12835568">
        <id>Q5VZ52</id>
        <label>MORN5</label>
    </interactant>
    <organismsDiffer>false</organismsDiffer>
    <experiments>3</experiments>
</comment>
<comment type="interaction">
    <interactant intactId="EBI-743272">
        <id>O75604</id>
    </interactant>
    <interactant intactId="EBI-723426">
        <id>Q13084</id>
        <label>MRPL28</label>
    </interactant>
    <organismsDiffer>false</organismsDiffer>
    <experiments>3</experiments>
</comment>
<comment type="interaction">
    <interactant intactId="EBI-743272">
        <id>O75604</id>
    </interactant>
    <interactant intactId="EBI-742948">
        <id>Q5JR59</id>
        <label>MTUS2</label>
    </interactant>
    <organismsDiffer>false</organismsDiffer>
    <experiments>3</experiments>
</comment>
<comment type="interaction">
    <interactant intactId="EBI-743272">
        <id>O75604</id>
    </interactant>
    <interactant intactId="EBI-11522433">
        <id>Q5JR59-3</id>
        <label>MTUS2</label>
    </interactant>
    <organismsDiffer>false</organismsDiffer>
    <experiments>3</experiments>
</comment>
<comment type="interaction">
    <interactant intactId="EBI-743272">
        <id>O75604</id>
    </interactant>
    <interactant intactId="EBI-8641936">
        <id>Q15742</id>
        <label>NAB2</label>
    </interactant>
    <organismsDiffer>false</organismsDiffer>
    <experiments>3</experiments>
</comment>
<comment type="interaction">
    <interactant intactId="EBI-743272">
        <id>O75604</id>
    </interactant>
    <interactant intactId="EBI-928842">
        <id>Q9GZM8</id>
        <label>NDEL1</label>
    </interactant>
    <organismsDiffer>false</organismsDiffer>
    <experiments>6</experiments>
</comment>
<comment type="interaction">
    <interactant intactId="EBI-743272">
        <id>O75604</id>
    </interactant>
    <interactant intactId="EBI-10178578">
        <id>I6L9F6</id>
        <label>NEFL</label>
    </interactant>
    <organismsDiffer>false</organismsDiffer>
    <experiments>3</experiments>
</comment>
<comment type="interaction">
    <interactant intactId="EBI-743272">
        <id>O75604</id>
    </interactant>
    <interactant intactId="EBI-475646">
        <id>P07196</id>
        <label>NEFL</label>
    </interactant>
    <organismsDiffer>false</organismsDiffer>
    <experiments>3</experiments>
</comment>
<comment type="interaction">
    <interactant intactId="EBI-743272">
        <id>O75604</id>
    </interactant>
    <interactant intactId="EBI-536879">
        <id>O43482</id>
        <label>OIP5</label>
    </interactant>
    <organismsDiffer>false</organismsDiffer>
    <experiments>3</experiments>
</comment>
<comment type="interaction">
    <interactant intactId="EBI-743272">
        <id>O75604</id>
    </interactant>
    <interactant intactId="EBI-748974">
        <id>Q96CV9</id>
        <label>OPTN</label>
    </interactant>
    <organismsDiffer>false</organismsDiffer>
    <experiments>3</experiments>
</comment>
<comment type="interaction">
    <interactant intactId="EBI-743272">
        <id>O75604</id>
    </interactant>
    <interactant intactId="EBI-14066006">
        <id>Q4G0R1</id>
        <label>PIBF1</label>
    </interactant>
    <organismsDiffer>false</organismsDiffer>
    <experiments>3</experiments>
</comment>
<comment type="interaction">
    <interactant intactId="EBI-743272">
        <id>O75604</id>
    </interactant>
    <interactant intactId="EBI-79165">
        <id>Q9NRD5</id>
        <label>PICK1</label>
    </interactant>
    <organismsDiffer>false</organismsDiffer>
    <experiments>3</experiments>
</comment>
<comment type="interaction">
    <interactant intactId="EBI-743272">
        <id>O75604</id>
    </interactant>
    <interactant intactId="EBI-949255">
        <id>Q58EX7</id>
        <label>PLEKHG4</label>
    </interactant>
    <organismsDiffer>false</organismsDiffer>
    <experiments>3</experiments>
</comment>
<comment type="interaction">
    <interactant intactId="EBI-743272">
        <id>O75604</id>
    </interactant>
    <interactant intactId="EBI-302345">
        <id>Q8ND90</id>
        <label>PNMA1</label>
    </interactant>
    <organismsDiffer>false</organismsDiffer>
    <experiments>3</experiments>
</comment>
<comment type="interaction">
    <interactant intactId="EBI-743272">
        <id>O75604</id>
    </interactant>
    <interactant intactId="EBI-943588">
        <id>Q16633</id>
        <label>POU2AF1</label>
    </interactant>
    <organismsDiffer>false</organismsDiffer>
    <experiments>3</experiments>
</comment>
<comment type="interaction">
    <interactant intactId="EBI-743272">
        <id>O75604</id>
    </interactant>
    <interactant intactId="EBI-3957793">
        <id>Q9GZV8</id>
        <label>PRDM14</label>
    </interactant>
    <organismsDiffer>false</organismsDiffer>
    <experiments>3</experiments>
</comment>
<comment type="interaction">
    <interactant intactId="EBI-743272">
        <id>O75604</id>
    </interactant>
    <interactant intactId="EBI-1567866">
        <id>Q6MZQ0</id>
        <label>PRR5L</label>
    </interactant>
    <organismsDiffer>false</organismsDiffer>
    <experiments>3</experiments>
</comment>
<comment type="interaction">
    <interactant intactId="EBI-743272">
        <id>O75604</id>
    </interactant>
    <interactant intactId="EBI-447043">
        <id>Q15276</id>
        <label>RABEP1</label>
    </interactant>
    <organismsDiffer>false</organismsDiffer>
    <experiments>3</experiments>
</comment>
<comment type="interaction">
    <interactant intactId="EBI-743272">
        <id>O75604</id>
    </interactant>
    <interactant intactId="EBI-746118">
        <id>Q8HWS3</id>
        <label>RFX6</label>
    </interactant>
    <organismsDiffer>false</organismsDiffer>
    <experiments>3</experiments>
</comment>
<comment type="interaction">
    <interactant intactId="EBI-743272">
        <id>O75604</id>
    </interactant>
    <interactant intactId="EBI-11957366">
        <id>Q59EK9-3</id>
        <label>RUNDC3A</label>
    </interactant>
    <organismsDiffer>false</organismsDiffer>
    <experiments>3</experiments>
</comment>
<comment type="interaction">
    <interactant intactId="EBI-743272">
        <id>O75604</id>
    </interactant>
    <interactant intactId="EBI-717048">
        <id>P60903</id>
        <label>S100A10</label>
    </interactant>
    <organismsDiffer>false</organismsDiffer>
    <experiments>3</experiments>
</comment>
<comment type="interaction">
    <interactant intactId="EBI-743272">
        <id>O75604</id>
    </interactant>
    <interactant intactId="EBI-19952306">
        <id>O14492-2</id>
        <label>SH2B2</label>
    </interactant>
    <organismsDiffer>false</organismsDiffer>
    <experiments>3</experiments>
</comment>
<comment type="interaction">
    <interactant intactId="EBI-743272">
        <id>O75604</id>
    </interactant>
    <interactant intactId="EBI-741237">
        <id>O60504</id>
        <label>SORBS3</label>
    </interactant>
    <organismsDiffer>false</organismsDiffer>
    <experiments>3</experiments>
</comment>
<comment type="interaction">
    <interactant intactId="EBI-743272">
        <id>O75604</id>
    </interactant>
    <interactant intactId="EBI-11959123">
        <id>Q99932-2</id>
        <label>SPAG8</label>
    </interactant>
    <organismsDiffer>false</organismsDiffer>
    <experiments>3</experiments>
</comment>
<comment type="interaction">
    <interactant intactId="EBI-743272">
        <id>O75604</id>
    </interactant>
    <interactant intactId="EBI-12047907">
        <id>A6NLX3</id>
        <label>SPDYE4</label>
    </interactant>
    <organismsDiffer>false</organismsDiffer>
    <experiments>3</experiments>
</comment>
<comment type="interaction">
    <interactant intactId="EBI-743272">
        <id>O75604</id>
    </interactant>
    <interactant intactId="EBI-1186119">
        <id>P51692</id>
        <label>STAT5B</label>
    </interactant>
    <organismsDiffer>false</organismsDiffer>
    <experiments>3</experiments>
</comment>
<comment type="interaction">
    <interactant intactId="EBI-743272">
        <id>O75604</id>
    </interactant>
    <interactant intactId="EBI-529518">
        <id>Q86VP1</id>
        <label>TAX1BP1</label>
    </interactant>
    <organismsDiffer>false</organismsDiffer>
    <experiments>3</experiments>
</comment>
<comment type="interaction">
    <interactant intactId="EBI-743272">
        <id>O75604</id>
    </interactant>
    <interactant intactId="EBI-750487">
        <id>Q8WW24</id>
        <label>TEKT4</label>
    </interactant>
    <organismsDiffer>false</organismsDiffer>
    <experiments>3</experiments>
</comment>
<comment type="interaction">
    <interactant intactId="EBI-743272">
        <id>O75604</id>
    </interactant>
    <interactant intactId="EBI-1105213">
        <id>Q9UBB9</id>
        <label>TFIP11</label>
    </interactant>
    <organismsDiffer>false</organismsDiffer>
    <experiments>3</experiments>
</comment>
<comment type="interaction">
    <interactant intactId="EBI-743272">
        <id>O75604</id>
    </interactant>
    <interactant intactId="EBI-11741437">
        <id>Q08117-2</id>
        <label>TLE5</label>
    </interactant>
    <organismsDiffer>false</organismsDiffer>
    <experiments>5</experiments>
</comment>
<comment type="interaction">
    <interactant intactId="EBI-743272">
        <id>O75604</id>
    </interactant>
    <interactant intactId="EBI-7954198">
        <id>Q03169</id>
        <label>TNFAIP2</label>
    </interactant>
    <organismsDiffer>false</organismsDiffer>
    <experiments>3</experiments>
</comment>
<comment type="interaction">
    <interactant intactId="EBI-743272">
        <id>O75604</id>
    </interactant>
    <interactant intactId="EBI-359224">
        <id>Q13077</id>
        <label>TRAF1</label>
    </interactant>
    <organismsDiffer>false</organismsDiffer>
    <experiments>3</experiments>
</comment>
<comment type="interaction">
    <interactant intactId="EBI-743272">
        <id>O75604</id>
    </interactant>
    <interactant intactId="EBI-355744">
        <id>Q12933</id>
        <label>TRAF2</label>
    </interactant>
    <organismsDiffer>false</organismsDiffer>
    <experiments>7</experiments>
</comment>
<comment type="interaction">
    <interactant intactId="EBI-743272">
        <id>O75604</id>
    </interactant>
    <interactant intactId="EBI-359276">
        <id>Q9Y4K3</id>
        <label>TRAF6</label>
    </interactant>
    <organismsDiffer>false</organismsDiffer>
    <experiments>3</experiments>
</comment>
<comment type="interaction">
    <interactant intactId="EBI-743272">
        <id>O75604</id>
    </interactant>
    <interactant intactId="EBI-740098">
        <id>P36406</id>
        <label>TRIM23</label>
    </interactant>
    <organismsDiffer>false</organismsDiffer>
    <experiments>3</experiments>
</comment>
<comment type="interaction">
    <interactant intactId="EBI-743272">
        <id>O75604</id>
    </interactant>
    <interactant intactId="EBI-719493">
        <id>P14373</id>
        <label>TRIM27</label>
    </interactant>
    <organismsDiffer>false</organismsDiffer>
    <experiments>6</experiments>
</comment>
<comment type="interaction">
    <interactant intactId="EBI-743272">
        <id>O75604</id>
    </interactant>
    <interactant intactId="EBI-9867283">
        <id>Q86XT4</id>
        <label>TRIM50</label>
    </interactant>
    <organismsDiffer>false</organismsDiffer>
    <experiments>3</experiments>
</comment>
<comment type="interaction">
    <interactant intactId="EBI-743272">
        <id>O75604</id>
    </interactant>
    <interactant intactId="EBI-742327">
        <id>Q15654</id>
        <label>TRIP6</label>
    </interactant>
    <organismsDiffer>false</organismsDiffer>
    <experiments>3</experiments>
</comment>
<comment type="interaction">
    <interactant intactId="EBI-743272">
        <id>O75604</id>
    </interactant>
    <interactant intactId="EBI-739895">
        <id>Q8N6Y0</id>
        <label>USHBP1</label>
    </interactant>
    <organismsDiffer>false</organismsDiffer>
    <experiments>3</experiments>
</comment>
<comment type="interaction">
    <interactant intactId="EBI-743272">
        <id>O75604</id>
    </interactant>
    <interactant intactId="EBI-11975223">
        <id>Q70EL1-9</id>
        <label>USP54</label>
    </interactant>
    <organismsDiffer>false</organismsDiffer>
    <experiments>3</experiments>
</comment>
<comment type="interaction">
    <interactant intactId="EBI-743272">
        <id>O75604</id>
    </interactant>
    <interactant intactId="EBI-12146727">
        <id>Q9UK41-2</id>
        <label>VPS28</label>
    </interactant>
    <organismsDiffer>false</organismsDiffer>
    <experiments>3</experiments>
</comment>
<comment type="interaction">
    <interactant intactId="EBI-743272">
        <id>O75604</id>
    </interactant>
    <interactant intactId="EBI-2799833">
        <id>Q8N1B4</id>
        <label>VPS52</label>
    </interactant>
    <organismsDiffer>false</organismsDiffer>
    <experiments>6</experiments>
</comment>
<comment type="interaction">
    <interactant intactId="EBI-743272">
        <id>O75604</id>
    </interactant>
    <interactant intactId="EBI-740037">
        <id>O96006</id>
        <label>ZBED1</label>
    </interactant>
    <organismsDiffer>false</organismsDiffer>
    <experiments>3</experiments>
</comment>
<comment type="interaction">
    <interactant intactId="EBI-743272">
        <id>O75604</id>
    </interactant>
    <interactant intactId="EBI-11962760">
        <id>Q9NZV7</id>
        <label>ZIM2</label>
    </interactant>
    <organismsDiffer>false</organismsDiffer>
    <experiments>3</experiments>
</comment>
<comment type="interaction">
    <interactant intactId="EBI-743272">
        <id>O75604</id>
    </interactant>
    <interactant intactId="EBI-527853">
        <id>Q9UGI0</id>
        <label>ZRANB1</label>
    </interactant>
    <organismsDiffer>false</organismsDiffer>
    <experiments>3</experiments>
</comment>
<comment type="interaction">
    <interactant intactId="EBI-10696113">
        <id>O75604-3</id>
    </interactant>
    <interactant intactId="EBI-77613">
        <id>P05067</id>
        <label>APP</label>
    </interactant>
    <organismsDiffer>false</organismsDiffer>
    <experiments>3</experiments>
</comment>
<comment type="interaction">
    <interactant intactId="EBI-10696113">
        <id>O75604-3</id>
    </interactant>
    <interactant intactId="EBI-930964">
        <id>P54253</id>
        <label>ATXN1</label>
    </interactant>
    <organismsDiffer>false</organismsDiffer>
    <experiments>6</experiments>
</comment>
<comment type="interaction">
    <interactant intactId="EBI-10696113">
        <id>O75604-3</id>
    </interactant>
    <interactant intactId="EBI-10976677">
        <id>G5E9A7</id>
        <label>DMWD</label>
    </interactant>
    <organismsDiffer>false</organismsDiffer>
    <experiments>3</experiments>
</comment>
<comment type="interaction">
    <interactant intactId="EBI-10696113">
        <id>O75604-3</id>
    </interactant>
    <interactant intactId="EBI-750300">
        <id>Q01658</id>
        <label>DR1</label>
    </interactant>
    <organismsDiffer>false</organismsDiffer>
    <experiments>3</experiments>
</comment>
<comment type="interaction">
    <interactant intactId="EBI-10696113">
        <id>O75604-3</id>
    </interactant>
    <interactant intactId="EBI-389564">
        <id>Q00403</id>
        <label>GTF2B</label>
    </interactant>
    <organismsDiffer>false</organismsDiffer>
    <experiments>3</experiments>
</comment>
<comment type="interaction">
    <interactant intactId="EBI-10696113">
        <id>O75604-3</id>
    </interactant>
    <interactant intactId="EBI-1054873">
        <id>Q9Y5Q9</id>
        <label>GTF3C3</label>
    </interactant>
    <organismsDiffer>false</organismsDiffer>
    <experiments>3</experiments>
</comment>
<comment type="interaction">
    <interactant intactId="EBI-10696113">
        <id>O75604-3</id>
    </interactant>
    <interactant intactId="EBI-352682">
        <id>P04792</id>
        <label>HSPB1</label>
    </interactant>
    <organismsDiffer>false</organismsDiffer>
    <experiments>3</experiments>
</comment>
<comment type="interaction">
    <interactant intactId="EBI-10696113">
        <id>O75604-3</id>
    </interactant>
    <interactant intactId="EBI-517086">
        <id>O43464</id>
        <label>HTRA2</label>
    </interactant>
    <organismsDiffer>false</organismsDiffer>
    <experiments>3</experiments>
</comment>
<comment type="interaction">
    <interactant intactId="EBI-10696113">
        <id>O75604-3</id>
    </interactant>
    <interactant intactId="EBI-466029">
        <id>P42858</id>
        <label>HTT</label>
    </interactant>
    <organismsDiffer>false</organismsDiffer>
    <experiments>6</experiments>
</comment>
<comment type="interaction">
    <interactant intactId="EBI-10696113">
        <id>O75604-3</id>
    </interactant>
    <interactant intactId="EBI-1055254">
        <id>Q8WXH2</id>
        <label>JPH3</label>
    </interactant>
    <organismsDiffer>false</organismsDiffer>
    <experiments>3</experiments>
</comment>
<comment type="interaction">
    <interactant intactId="EBI-10696113">
        <id>O75604-3</id>
    </interactant>
    <interactant intactId="EBI-10975473">
        <id>O60333-2</id>
        <label>KIF1B</label>
    </interactant>
    <organismsDiffer>false</organismsDiffer>
    <experiments>3</experiments>
</comment>
<comment type="interaction">
    <interactant intactId="EBI-10696113">
        <id>O75604-3</id>
    </interactant>
    <interactant intactId="EBI-50433196">
        <id>A0A6Q8PF08</id>
        <label>PMP22</label>
    </interactant>
    <organismsDiffer>false</organismsDiffer>
    <experiments>3</experiments>
</comment>
<comment type="interaction">
    <interactant intactId="EBI-10696113">
        <id>O75604-3</id>
    </interactant>
    <interactant intactId="EBI-21251460">
        <id>O60260-5</id>
        <label>PRKN</label>
    </interactant>
    <organismsDiffer>false</organismsDiffer>
    <experiments>3</experiments>
</comment>
<comment type="interaction">
    <interactant intactId="EBI-10696113">
        <id>O75604-3</id>
    </interactant>
    <interactant intactId="EBI-749195">
        <id>P60891</id>
        <label>PRPS1</label>
    </interactant>
    <organismsDiffer>false</organismsDiffer>
    <experiments>3</experiments>
</comment>
<comment type="interaction">
    <interactant intactId="EBI-10696113">
        <id>O75604-3</id>
    </interactant>
    <interactant intactId="EBI-396669">
        <id>Q9Y3C5</id>
        <label>RNF11</label>
    </interactant>
    <organismsDiffer>false</organismsDiffer>
    <experiments>3</experiments>
</comment>
<comment type="interaction">
    <interactant intactId="EBI-10696113">
        <id>O75604-3</id>
    </interactant>
    <interactant intactId="EBI-1220123">
        <id>Q7Z333</id>
        <label>SETX</label>
    </interactant>
    <organismsDiffer>false</organismsDiffer>
    <experiments>3</experiments>
</comment>
<comment type="interaction">
    <interactant intactId="EBI-10696113">
        <id>O75604-3</id>
    </interactant>
    <interactant intactId="EBI-985879">
        <id>P37840</id>
        <label>SNCA</label>
    </interactant>
    <organismsDiffer>false</organismsDiffer>
    <experiments>3</experiments>
</comment>
<comment type="interaction">
    <interactant intactId="EBI-10696113">
        <id>O75604-3</id>
    </interactant>
    <interactant intactId="EBI-990792">
        <id>P00441</id>
        <label>SOD1</label>
    </interactant>
    <organismsDiffer>false</organismsDiffer>
    <experiments>3</experiments>
</comment>
<comment type="interaction">
    <interactant intactId="EBI-10696113">
        <id>O75604-3</id>
    </interactant>
    <interactant intactId="EBI-5235340">
        <id>Q7Z699</id>
        <label>SPRED1</label>
    </interactant>
    <organismsDiffer>false</organismsDiffer>
    <experiments>3</experiments>
</comment>
<comment type="interaction">
    <interactant intactId="EBI-10696113">
        <id>O75604-3</id>
    </interactant>
    <interactant intactId="EBI-372899">
        <id>Q13148</id>
        <label>TARDBP</label>
    </interactant>
    <organismsDiffer>false</organismsDiffer>
    <experiments>6</experiments>
</comment>
<comment type="interaction">
    <interactant intactId="EBI-10696113">
        <id>O75604-3</id>
    </interactant>
    <interactant intactId="EBI-720609">
        <id>O76024</id>
        <label>WFS1</label>
    </interactant>
    <organismsDiffer>false</organismsDiffer>
    <experiments>3</experiments>
</comment>
<comment type="subcellular location">
    <subcellularLocation>
        <location evidence="1">Cytoplasm</location>
    </subcellularLocation>
    <subcellularLocation>
        <location evidence="1">Cytoplasm</location>
        <location evidence="1">Perinuclear region</location>
    </subcellularLocation>
    <text evidence="2">Localizes in the spermatid head in late-elongating spermatids in the thin area between the outer acrosomal membrane and the plasma membrane.</text>
</comment>
<comment type="subcellular location">
    <molecule>Isoform 4</molecule>
    <subcellularLocation>
        <location evidence="2">Nucleus</location>
    </subcellularLocation>
    <subcellularLocation>
        <location evidence="1">Membrane</location>
        <topology evidence="16">Peripheral membrane protein</topology>
    </subcellularLocation>
    <subcellularLocation>
        <location evidence="1">Cytoplasm</location>
    </subcellularLocation>
    <text evidence="1">Predominantly expressed at membranes.</text>
</comment>
<comment type="alternative products">
    <event type="alternative splicing"/>
    <isoform>
        <id>O75604-1</id>
        <name>1</name>
        <name>USP2a</name>
        <name>USP2-69</name>
        <sequence type="displayed"/>
    </isoform>
    <isoform>
        <id>O75604-2</id>
        <name>2</name>
        <name>USP2b</name>
        <sequence type="described" ref="VSP_005256 VSP_005257"/>
    </isoform>
    <isoform>
        <id>O75604-3</id>
        <name>3</name>
        <sequence type="described" ref="VSP_039559"/>
    </isoform>
    <isoform>
        <id>O75604-4</id>
        <name>4</name>
        <sequence type="described" ref="VSP_039560"/>
    </isoform>
</comment>
<comment type="tissue specificity">
    <text evidence="10">Expressed in mesangial cells of the kidney and in different types of glomerulonephritides (at protein level).</text>
</comment>
<comment type="induction">
    <text evidence="8">Down-regulated by cisplatin (at protein level).</text>
</comment>
<comment type="domain">
    <text evidence="2">The different N-terminus extensions of isoform 1 and isoform 4 determine their respective subcellular localization and differential effect on myoblast fusion and accumulation of muscle-specific proteins. The different N-terminus extensions of isoform 1 and isoform 4 are not essential for their catalytic activity.</text>
</comment>
<comment type="similarity">
    <text evidence="16">Belongs to the peptidase C19 family. USP2 subfamily.</text>
</comment>